<accession>O80735</accession>
<reference key="1">
    <citation type="journal article" date="2000" name="Nature">
        <title>Sequence and analysis of chromosome 1 of the plant Arabidopsis thaliana.</title>
        <authorList>
            <person name="Theologis A."/>
            <person name="Ecker J.R."/>
            <person name="Palm C.J."/>
            <person name="Federspiel N.A."/>
            <person name="Kaul S."/>
            <person name="White O."/>
            <person name="Alonso J."/>
            <person name="Altafi H."/>
            <person name="Araujo R."/>
            <person name="Bowman C.L."/>
            <person name="Brooks S.Y."/>
            <person name="Buehler E."/>
            <person name="Chan A."/>
            <person name="Chao Q."/>
            <person name="Chen H."/>
            <person name="Cheuk R.F."/>
            <person name="Chin C.W."/>
            <person name="Chung M.K."/>
            <person name="Conn L."/>
            <person name="Conway A.B."/>
            <person name="Conway A.R."/>
            <person name="Creasy T.H."/>
            <person name="Dewar K."/>
            <person name="Dunn P."/>
            <person name="Etgu P."/>
            <person name="Feldblyum T.V."/>
            <person name="Feng J.-D."/>
            <person name="Fong B."/>
            <person name="Fujii C.Y."/>
            <person name="Gill J.E."/>
            <person name="Goldsmith A.D."/>
            <person name="Haas B."/>
            <person name="Hansen N.F."/>
            <person name="Hughes B."/>
            <person name="Huizar L."/>
            <person name="Hunter J.L."/>
            <person name="Jenkins J."/>
            <person name="Johnson-Hopson C."/>
            <person name="Khan S."/>
            <person name="Khaykin E."/>
            <person name="Kim C.J."/>
            <person name="Koo H.L."/>
            <person name="Kremenetskaia I."/>
            <person name="Kurtz D.B."/>
            <person name="Kwan A."/>
            <person name="Lam B."/>
            <person name="Langin-Hooper S."/>
            <person name="Lee A."/>
            <person name="Lee J.M."/>
            <person name="Lenz C.A."/>
            <person name="Li J.H."/>
            <person name="Li Y.-P."/>
            <person name="Lin X."/>
            <person name="Liu S.X."/>
            <person name="Liu Z.A."/>
            <person name="Luros J.S."/>
            <person name="Maiti R."/>
            <person name="Marziali A."/>
            <person name="Militscher J."/>
            <person name="Miranda M."/>
            <person name="Nguyen M."/>
            <person name="Nierman W.C."/>
            <person name="Osborne B.I."/>
            <person name="Pai G."/>
            <person name="Peterson J."/>
            <person name="Pham P.K."/>
            <person name="Rizzo M."/>
            <person name="Rooney T."/>
            <person name="Rowley D."/>
            <person name="Sakano H."/>
            <person name="Salzberg S.L."/>
            <person name="Schwartz J.R."/>
            <person name="Shinn P."/>
            <person name="Southwick A.M."/>
            <person name="Sun H."/>
            <person name="Tallon L.J."/>
            <person name="Tambunga G."/>
            <person name="Toriumi M.J."/>
            <person name="Town C.D."/>
            <person name="Utterback T."/>
            <person name="Van Aken S."/>
            <person name="Vaysberg M."/>
            <person name="Vysotskaia V.S."/>
            <person name="Walker M."/>
            <person name="Wu D."/>
            <person name="Yu G."/>
            <person name="Fraser C.M."/>
            <person name="Venter J.C."/>
            <person name="Davis R.W."/>
        </authorList>
    </citation>
    <scope>NUCLEOTIDE SEQUENCE [LARGE SCALE GENOMIC DNA]</scope>
    <source>
        <strain>cv. Columbia</strain>
    </source>
</reference>
<reference key="2">
    <citation type="journal article" date="2017" name="Plant J.">
        <title>Araport11: a complete reannotation of the Arabidopsis thaliana reference genome.</title>
        <authorList>
            <person name="Cheng C.Y."/>
            <person name="Krishnakumar V."/>
            <person name="Chan A.P."/>
            <person name="Thibaud-Nissen F."/>
            <person name="Schobel S."/>
            <person name="Town C.D."/>
        </authorList>
    </citation>
    <scope>GENOME REANNOTATION</scope>
    <source>
        <strain>cv. Columbia</strain>
    </source>
</reference>
<reference key="3">
    <citation type="journal article" date="2008" name="Plant Cell Physiol.">
        <title>Antagonistic jacalin-related lectins regulate the size of ER body-type beta-glucosidase complexes in Arabidopsis thaliana.</title>
        <authorList>
            <person name="Nagano A.J."/>
            <person name="Fukao Y."/>
            <person name="Fujiwara M."/>
            <person name="Nishimura M."/>
            <person name="Hara-Nishimura I."/>
        </authorList>
    </citation>
    <scope>GENE FAMILY</scope>
    <scope>NOMENCLATURE</scope>
</reference>
<keyword id="KW-0430">Lectin</keyword>
<keyword id="KW-1185">Reference proteome</keyword>
<keyword id="KW-0677">Repeat</keyword>
<protein>
    <recommendedName>
        <fullName>Jacalin-related lectin 16</fullName>
    </recommendedName>
</protein>
<dbReference type="EMBL" id="AC004473">
    <property type="protein sequence ID" value="AAC24045.1"/>
    <property type="molecule type" value="Genomic_DNA"/>
</dbReference>
<dbReference type="EMBL" id="CP002684">
    <property type="status" value="NOT_ANNOTATED_CDS"/>
    <property type="molecule type" value="Genomic_DNA"/>
</dbReference>
<dbReference type="PIR" id="T02264">
    <property type="entry name" value="T02264"/>
</dbReference>
<dbReference type="SMR" id="O80735"/>
<dbReference type="FunCoup" id="O80735">
    <property type="interactions" value="4"/>
</dbReference>
<dbReference type="PaxDb" id="3702-AT1G60095.1"/>
<dbReference type="Araport" id="AT1G60095"/>
<dbReference type="TAIR" id="AT1G60095"/>
<dbReference type="eggNOG" id="ENOG502SCUZ">
    <property type="taxonomic scope" value="Eukaryota"/>
</dbReference>
<dbReference type="HOGENOM" id="CLU_041730_0_0_1"/>
<dbReference type="InParanoid" id="O80735"/>
<dbReference type="PhylomeDB" id="O80735"/>
<dbReference type="PRO" id="PR:O80735"/>
<dbReference type="Proteomes" id="UP000006548">
    <property type="component" value="Chromosome 1"/>
</dbReference>
<dbReference type="ExpressionAtlas" id="O80735">
    <property type="expression patterns" value="baseline and differential"/>
</dbReference>
<dbReference type="GO" id="GO:0030246">
    <property type="term" value="F:carbohydrate binding"/>
    <property type="evidence" value="ECO:0007669"/>
    <property type="project" value="UniProtKB-KW"/>
</dbReference>
<dbReference type="CDD" id="cd09612">
    <property type="entry name" value="Jacalin"/>
    <property type="match status" value="3"/>
</dbReference>
<dbReference type="FunFam" id="2.100.10.30:FF:000001">
    <property type="entry name" value="Jacalin-related lectin 33"/>
    <property type="match status" value="3"/>
</dbReference>
<dbReference type="Gene3D" id="2.100.10.30">
    <property type="entry name" value="Jacalin-like lectin domain"/>
    <property type="match status" value="4"/>
</dbReference>
<dbReference type="InterPro" id="IPR001229">
    <property type="entry name" value="Jacalin-like_lectin_dom"/>
</dbReference>
<dbReference type="InterPro" id="IPR033734">
    <property type="entry name" value="Jacalin-like_lectin_dom_plant"/>
</dbReference>
<dbReference type="InterPro" id="IPR036404">
    <property type="entry name" value="Jacalin-like_lectin_dom_sf"/>
</dbReference>
<dbReference type="PANTHER" id="PTHR47293:SF58">
    <property type="entry name" value="JACALIN-RELATED LECTIN 22-RELATED"/>
    <property type="match status" value="1"/>
</dbReference>
<dbReference type="PANTHER" id="PTHR47293">
    <property type="entry name" value="JACALIN-RELATED LECTIN 3"/>
    <property type="match status" value="1"/>
</dbReference>
<dbReference type="Pfam" id="PF01419">
    <property type="entry name" value="Jacalin"/>
    <property type="match status" value="4"/>
</dbReference>
<dbReference type="SMART" id="SM00915">
    <property type="entry name" value="Jacalin"/>
    <property type="match status" value="4"/>
</dbReference>
<dbReference type="SUPFAM" id="SSF51101">
    <property type="entry name" value="Mannose-binding lectins"/>
    <property type="match status" value="4"/>
</dbReference>
<dbReference type="PROSITE" id="PS51752">
    <property type="entry name" value="JACALIN_LECTIN"/>
    <property type="match status" value="4"/>
</dbReference>
<name>JAL16_ARATH</name>
<feature type="chain" id="PRO_0000430384" description="Jacalin-related lectin 16">
    <location>
        <begin position="1"/>
        <end position="531"/>
    </location>
</feature>
<feature type="domain" description="Jacalin-type lectin 1" evidence="1">
    <location>
        <begin position="1"/>
        <end position="87"/>
    </location>
</feature>
<feature type="domain" description="Jacalin-type lectin 2" evidence="1">
    <location>
        <begin position="90"/>
        <end position="232"/>
    </location>
</feature>
<feature type="domain" description="Jacalin-type lectin 3" evidence="1">
    <location>
        <begin position="235"/>
        <end position="378"/>
    </location>
</feature>
<feature type="domain" description="Jacalin-type lectin 4" evidence="1">
    <location>
        <begin position="385"/>
        <end position="528"/>
    </location>
</feature>
<organism>
    <name type="scientific">Arabidopsis thaliana</name>
    <name type="common">Mouse-ear cress</name>
    <dbReference type="NCBI Taxonomy" id="3702"/>
    <lineage>
        <taxon>Eukaryota</taxon>
        <taxon>Viridiplantae</taxon>
        <taxon>Streptophyta</taxon>
        <taxon>Embryophyta</taxon>
        <taxon>Tracheophyta</taxon>
        <taxon>Spermatophyta</taxon>
        <taxon>Magnoliopsida</taxon>
        <taxon>eudicotyledons</taxon>
        <taxon>Gunneridae</taxon>
        <taxon>Pentapetalae</taxon>
        <taxon>rosids</taxon>
        <taxon>malvids</taxon>
        <taxon>Brassicales</taxon>
        <taxon>Brassicaceae</taxon>
        <taxon>Camelineae</taxon>
        <taxon>Arabidopsis</taxon>
    </lineage>
</organism>
<proteinExistence type="inferred from homology"/>
<sequence length="531" mass="59132">MDRSMFEIDHKKDEQLVSVEGYCKPGSDLIQGVQFKTNLRISEIIGFEKAIFGNPTTFSLAEDGKKIIGFHGYSMANLNSLGAYFTWISPTKMEAKGGKGGTEWNDGAEHEGFTKIYVQGGCDGIQYIKFDYVKDGQHKYGSPHGVKGSESTEPFEINHLDKEYLISVEGYYDEGDSGVIQGIQFKTNIKTSELIGDKKGRKFSLAANGKKIIGFHGYADKNLNSLGAYFTTSPLISLEHTTGSDLVNHIWDDGSFEGVRKVYVRYDSLEICYVEFDYDNKGKVEKREHGMFYSWVQQGEFVVDYPNEFITSVEGTMRTESFMQVASLTFKTSKGRTSSTFGSPSDSKFLLESKGCGVVGFYGRCFSSIFDLGAYFRPLPPPSNTEKVEAKGGDGGASWDDGGFDGIRNIYIGHNKMGIAFVKFLYDKDSQIVVGDDHGSNTLLRVDEFELEHPGEYLISVEGSYDVVDGSESEVIRMLRFKTNLRTSQLFGHETTPSFILEKECHKIVGFHGKIGKMLHQIGVNVLPITD</sequence>
<comment type="similarity">
    <text evidence="1 2">Belongs to the jacalin lectin family.</text>
</comment>
<evidence type="ECO:0000255" key="1">
    <source>
        <dbReference type="PROSITE-ProRule" id="PRU01088"/>
    </source>
</evidence>
<evidence type="ECO:0000305" key="2"/>
<gene>
    <name type="primary">JAL16</name>
    <name type="ordered locus">At1g60095</name>
    <name type="ORF">T13D8.1</name>
</gene>